<accession>Q5TCS8</accession>
<accession>A6NL75</accession>
<accession>B2RDJ0</accession>
<accession>B6ZDM7</accession>
<accession>Q3MIS4</accession>
<accession>Q5I0W8</accession>
<accession>Q6ZNF1</accession>
<accession>Q6ZVR7</accession>
<accession>Q8N7C6</accession>
<accession>Q8WW00</accession>
<accession>Q96NF4</accession>
<organism>
    <name type="scientific">Homo sapiens</name>
    <name type="common">Human</name>
    <dbReference type="NCBI Taxonomy" id="9606"/>
    <lineage>
        <taxon>Eukaryota</taxon>
        <taxon>Metazoa</taxon>
        <taxon>Chordata</taxon>
        <taxon>Craniata</taxon>
        <taxon>Vertebrata</taxon>
        <taxon>Euteleostomi</taxon>
        <taxon>Mammalia</taxon>
        <taxon>Eutheria</taxon>
        <taxon>Euarchontoglires</taxon>
        <taxon>Primates</taxon>
        <taxon>Haplorrhini</taxon>
        <taxon>Catarrhini</taxon>
        <taxon>Hominidae</taxon>
        <taxon>Homo</taxon>
    </lineage>
</organism>
<evidence type="ECO:0000250" key="1">
    <source>
        <dbReference type="UniProtKB" id="G3UYQ4"/>
    </source>
</evidence>
<evidence type="ECO:0000250" key="2">
    <source>
        <dbReference type="UniProtKB" id="P69441"/>
    </source>
</evidence>
<evidence type="ECO:0000255" key="3"/>
<evidence type="ECO:0000256" key="4">
    <source>
        <dbReference type="SAM" id="MobiDB-lite"/>
    </source>
</evidence>
<evidence type="ECO:0000269" key="5">
    <source>
    </source>
</evidence>
<evidence type="ECO:0000269" key="6">
    <source>
    </source>
</evidence>
<evidence type="ECO:0000303" key="7">
    <source>
    </source>
</evidence>
<evidence type="ECO:0000303" key="8">
    <source>
    </source>
</evidence>
<evidence type="ECO:0000303" key="9">
    <source>
    </source>
</evidence>
<evidence type="ECO:0000305" key="10"/>
<evidence type="ECO:0000312" key="11">
    <source>
        <dbReference type="HGNC" id="HGNC:33814"/>
    </source>
</evidence>
<protein>
    <recommendedName>
        <fullName evidence="9">Adenylate kinase 9</fullName>
        <ecNumber evidence="5">2.7.4.4</ecNumber>
        <ecNumber evidence="5">2.7.4.6</ecNumber>
    </recommendedName>
    <alternativeName>
        <fullName evidence="11">Adenylate kinase domain-containing protein 1</fullName>
    </alternativeName>
    <alternativeName>
        <fullName evidence="11">Adenylate kinase domain-containing protein 2</fullName>
    </alternativeName>
</protein>
<proteinExistence type="evidence at protein level"/>
<keyword id="KW-0025">Alternative splicing</keyword>
<keyword id="KW-0067">ATP-binding</keyword>
<keyword id="KW-0966">Cell projection</keyword>
<keyword id="KW-0969">Cilium</keyword>
<keyword id="KW-0175">Coiled coil</keyword>
<keyword id="KW-0963">Cytoplasm</keyword>
<keyword id="KW-0282">Flagellum</keyword>
<keyword id="KW-0418">Kinase</keyword>
<keyword id="KW-0546">Nucleotide metabolism</keyword>
<keyword id="KW-0547">Nucleotide-binding</keyword>
<keyword id="KW-0539">Nucleus</keyword>
<keyword id="KW-1267">Proteomics identification</keyword>
<keyword id="KW-1185">Reference proteome</keyword>
<keyword id="KW-0808">Transferase</keyword>
<sequence>MTSQEKTEEYPFADIFDEDETERNFLLSKPVCFVVFGKPGVGKTTLARYITQAWKCIRVEALPILEEQIAAETESGVMLQSMLISGQSIPDELVIKLMLEKLNSPEVCHFGYIITEIPSLSQDAMTTLQQIELIKNLNLKPDVIINIKCPDYDLCQRISGQRQHNNTGYIYSRDQWDPEVIENHRKKKKEAQKDGKGEEEEEEEEQEEEEAFIAEMQMVAEILHHLVQRPEDYLENVENIVKLYKETILQTLEEVMAEHNPQYLIELNGNKPAEELFMIVMDRLKYLNLKRAAILTKLQGAEEEINDTMENDELFRTLASYKLIAPRYRWQRSKWGRTCPVNLKDGNIYSGLPDYSVSFLGKIYCLSSEEALKPFLLNPRPYLLPPMPGPPCKVFILGPQYSGKTTLCNMLAENYKGKVVDYAQLVQPRFDKARETLVENTIAEATAAAIKVVKEKLLRELQARKQAETALREFQRQYEKMEFGVFPMEATHSSIDEEGYIQGSQRDRGSSLVDTEEAKTKSENVLHDQAAKVDKDDGKETGETFTFKRHSQDASQDVKLYSDTAPTEDLIEEVTADHPEVVTMIEETIKMSQDINFEQPYEKHAEILQEVLGEVMEENKDRFPGAPKYGGWIVDNCPIVKELWMALIKKGIIPDLVIYLSDTENNGKCLFNRIYLQKKSEIDSKILERLLEELQKKKKEEEEARKATEEELRLEEENRRLLELMKVKAKEAEETDNEDEEEIEGDELEVHEEPEASHDTRGSWLPEEFEASEVPETEPEAVSEPIEETTVETEIPKGSKEGLEIEKLSETVVLPEFPEDSYPDVPEMEPFKEKIGSFIILWKQLEATISEAYIKILNLEIADRTPQELLQKVVETMEKPFQYTAWELTGEDYEEETEDYQTEAEVDEELEEEEEEEGEDKMKERKRHLGDTKHFCPVVLKENFILQPGNTEEAAKYREKIYYFSSAEAKEKFLEHPEDYVAHEEPLKAPPLRICLVGPQGSGKTMCGRQLAEKLNIFHIQFEEVLQEKLLLKTEKKVGPEFEEDSENEQAAKQELEELAIQANVKVEEENTKKQLPEVQLTEEEEVIKSSLMENEPLPPEILEVILSEWWLKEPIRSTGFILDGFPRYPEEAQFLGDRGFFPDAAVFIQVDDQDIFDRLLPAQIEKWKLKQKKKLERKKLIKDMKAKIRVDTIAKRRAELILERDKKRRENVVRDDEEISEEELEEDNDDIENILEDEFPKDEEEMSGEEDEEQETDAIERLRGELGEKFEADTHNLQIIQDELERYLIPIISINGARRNHIVQYTLNMKLKPLVENRASIFEKCHPIPAPLAQKMLTFTYKYISSFGYWDPVKLSEGETIKPVENAENPIYPVIHRQYIYFLSSKETKEKFMKNPIKYIRQPKPKPTVPIRIIIVGPPKSGKTTVAKKITSEYGLKHLSIGGALRYVLNNHPETELALMLNWHLHKGMTAPDELAIQALELSLMESVCNTAGVVIDGYPVTKHQMNLLEARSIIPMVIFELSVPSKEIFKRLLLEKENEQRLPYPLHNSAQIVAVNNVKYRKNIGEIRQYYQEQHQNWYVIDGFHSKWWVWNEVIKNVQMVNKYMQTYLERIKAGKAACIDKLCITPQELLSRLGEFEQFCPVSLAESQELFDCSATDSLEFAAEFRGHYYKMSSQEKLNKFLENPELYVPPLAPHPLPSADMIPKRLTLSELKSRFPKCAELQGYCPVTYKDGNQRYEALVPGSINYALEYHNRIYICENKEKLQKFLRSPLKYWEQKLPHKLPPLREPILLTSLPLPGYLEQGIATSLIKAMNAAGCLKPKFPFLSIRRSALLYIALHLKAFNPKGSEYTRKKYKKKMEQFMESCELITYLGAKMTRKYKEPQFRAIDFDHKLKTFLSLRNIDPING</sequence>
<feature type="chain" id="PRO_0000304138" description="Adenylate kinase 9">
    <location>
        <begin position="1"/>
        <end position="1911"/>
    </location>
</feature>
<feature type="region of interest" description="Adenylate kinase 1" evidence="10">
    <location>
        <begin position="31"/>
        <end position="285"/>
    </location>
</feature>
<feature type="region of interest" description="NMP 1" evidence="2">
    <location>
        <begin position="60"/>
        <end position="89"/>
    </location>
</feature>
<feature type="region of interest" description="LID 1" evidence="2">
    <location>
        <begin position="160"/>
        <end position="205"/>
    </location>
</feature>
<feature type="region of interest" description="Disordered" evidence="4">
    <location>
        <begin position="185"/>
        <end position="210"/>
    </location>
</feature>
<feature type="region of interest" description="Disordered" evidence="4">
    <location>
        <begin position="728"/>
        <end position="796"/>
    </location>
</feature>
<feature type="region of interest" description="Disordered" evidence="4">
    <location>
        <begin position="892"/>
        <end position="926"/>
    </location>
</feature>
<feature type="region of interest" description="Adenylate kinase 2" evidence="10">
    <location>
        <begin position="992"/>
        <end position="1203"/>
    </location>
</feature>
<feature type="region of interest" description="NMP 2" evidence="2">
    <location>
        <begin position="1021"/>
        <end position="1052"/>
    </location>
</feature>
<feature type="region of interest" description="LID 2" evidence="2">
    <location>
        <begin position="1124"/>
        <end position="1144"/>
    </location>
</feature>
<feature type="region of interest" description="Adenylate kinase 3" evidence="10">
    <location>
        <begin position="1412"/>
        <end position="1601"/>
    </location>
</feature>
<feature type="region of interest" description="NMP 3" evidence="2">
    <location>
        <begin position="1441"/>
        <end position="1472"/>
    </location>
</feature>
<feature type="region of interest" description="LID 3" evidence="2">
    <location>
        <begin position="1536"/>
        <end position="1550"/>
    </location>
</feature>
<feature type="coiled-coil region" evidence="3">
    <location>
        <begin position="443"/>
        <end position="485"/>
    </location>
</feature>
<feature type="coiled-coil region" evidence="3">
    <location>
        <begin position="676"/>
        <end position="711"/>
    </location>
</feature>
<feature type="compositionally biased region" description="Acidic residues" evidence="4">
    <location>
        <begin position="197"/>
        <end position="210"/>
    </location>
</feature>
<feature type="compositionally biased region" description="Acidic residues" evidence="4">
    <location>
        <begin position="733"/>
        <end position="750"/>
    </location>
</feature>
<feature type="compositionally biased region" description="Basic and acidic residues" evidence="4">
    <location>
        <begin position="751"/>
        <end position="761"/>
    </location>
</feature>
<feature type="compositionally biased region" description="Acidic residues" evidence="4">
    <location>
        <begin position="767"/>
        <end position="791"/>
    </location>
</feature>
<feature type="compositionally biased region" description="Acidic residues" evidence="4">
    <location>
        <begin position="892"/>
        <end position="919"/>
    </location>
</feature>
<feature type="binding site" evidence="2">
    <location>
        <begin position="40"/>
        <end position="45"/>
    </location>
    <ligand>
        <name>ATP</name>
        <dbReference type="ChEBI" id="CHEBI:30616"/>
        <label>1</label>
    </ligand>
</feature>
<feature type="binding site" evidence="2">
    <location>
        <begin position="87"/>
        <end position="89"/>
    </location>
    <ligand>
        <name>AMP</name>
        <dbReference type="ChEBI" id="CHEBI:456215"/>
        <label>1</label>
    </ligand>
</feature>
<feature type="binding site" evidence="2">
    <location>
        <begin position="116"/>
        <end position="119"/>
    </location>
    <ligand>
        <name>AMP</name>
        <dbReference type="ChEBI" id="CHEBI:456215"/>
        <label>1</label>
    </ligand>
</feature>
<feature type="binding site" evidence="2">
    <location>
        <position position="229"/>
    </location>
    <ligand>
        <name>AMP</name>
        <dbReference type="ChEBI" id="CHEBI:456215"/>
        <label>1</label>
    </ligand>
</feature>
<feature type="binding site" evidence="2">
    <location>
        <begin position="1001"/>
        <end position="1006"/>
    </location>
    <ligand>
        <name>ATP</name>
        <dbReference type="ChEBI" id="CHEBI:30616"/>
        <label>2</label>
    </ligand>
</feature>
<feature type="binding site" evidence="2">
    <location>
        <begin position="1050"/>
        <end position="1052"/>
    </location>
    <ligand>
        <name>AMP</name>
        <dbReference type="ChEBI" id="CHEBI:456215"/>
        <label>2</label>
    </ligand>
</feature>
<feature type="binding site" evidence="2">
    <location>
        <begin position="1079"/>
        <end position="1082"/>
    </location>
    <ligand>
        <name>AMP</name>
        <dbReference type="ChEBI" id="CHEBI:456215"/>
        <label>2</label>
    </ligand>
</feature>
<feature type="binding site" evidence="2">
    <location>
        <begin position="1421"/>
        <end position="1426"/>
    </location>
    <ligand>
        <name>ATP</name>
        <dbReference type="ChEBI" id="CHEBI:30616"/>
        <label>3</label>
    </ligand>
</feature>
<feature type="binding site" evidence="2">
    <location>
        <position position="1447"/>
    </location>
    <ligand>
        <name>AMP</name>
        <dbReference type="ChEBI" id="CHEBI:456215"/>
        <label>3</label>
    </ligand>
</feature>
<feature type="binding site" evidence="2">
    <location>
        <begin position="1470"/>
        <end position="1472"/>
    </location>
    <ligand>
        <name>AMP</name>
        <dbReference type="ChEBI" id="CHEBI:456215"/>
        <label>3</label>
    </ligand>
</feature>
<feature type="binding site" evidence="2">
    <location>
        <begin position="1499"/>
        <end position="1502"/>
    </location>
    <ligand>
        <name>AMP</name>
        <dbReference type="ChEBI" id="CHEBI:456215"/>
        <label>3</label>
    </ligand>
</feature>
<feature type="binding site" evidence="2">
    <location>
        <position position="1506"/>
    </location>
    <ligand>
        <name>AMP</name>
        <dbReference type="ChEBI" id="CHEBI:456215"/>
        <label>3</label>
    </ligand>
</feature>
<feature type="binding site" evidence="2">
    <location>
        <position position="1543"/>
    </location>
    <ligand>
        <name>AMP</name>
        <dbReference type="ChEBI" id="CHEBI:456215"/>
        <label>3</label>
    </ligand>
</feature>
<feature type="splice variant" id="VSP_039638" description="In isoform 5." evidence="7">
    <location>
        <begin position="1"/>
        <end position="921"/>
    </location>
</feature>
<feature type="splice variant" id="VSP_028008" description="In isoform 2." evidence="7 8">
    <original>VD</original>
    <variation>TN</variation>
    <location>
        <begin position="420"/>
        <end position="421"/>
    </location>
</feature>
<feature type="splice variant" id="VSP_028009" description="In isoform 2." evidence="7 8">
    <location>
        <begin position="422"/>
        <end position="1911"/>
    </location>
</feature>
<feature type="splice variant" id="VSP_039639" description="In isoform 1." evidence="10">
    <original>EARKATEEELRLEEENRRLLELMKVKAKEAEETDNEDEEEIEGDELEVH</original>
    <variation>KSHRRGIETRRRKSKATGTYESEGKRQAQIAMTDDVSWYCYCKQLQYFK</variation>
    <location>
        <begin position="703"/>
        <end position="751"/>
    </location>
</feature>
<feature type="splice variant" id="VSP_039640" description="In isoform 1." evidence="10">
    <location>
        <begin position="752"/>
        <end position="1911"/>
    </location>
</feature>
<feature type="splice variant" id="VSP_028010" description="In isoform 3." evidence="7">
    <original>APPLRICLVGPQGSGKTMCGRQLAEK</original>
    <variation>VRQYSYLNDCSHRIFLGLITNHHQFT</variation>
    <location>
        <begin position="989"/>
        <end position="1014"/>
    </location>
</feature>
<feature type="splice variant" id="VSP_028011" description="In isoform 3." evidence="7">
    <location>
        <begin position="1015"/>
        <end position="1911"/>
    </location>
</feature>
<feature type="splice variant" id="VSP_039641" description="In isoform 6." evidence="8">
    <original>NVVRDDEEISEEELEEDNDDIENILEDEFPKDEEEMSGEEDEEQETDAIERLRGELGEKFEADTHNLQIIQD</original>
    <variation>PNKEKRKRGISENTTCYKCNHMSPWCEYAGLPYRGLLILYSATATATAGTKHCRSGAKVIVALSKQNIHNQK</variation>
    <location>
        <begin position="1212"/>
        <end position="1283"/>
    </location>
</feature>
<feature type="splice variant" id="VSP_039642" description="In isoform 5." evidence="7">
    <original>NVVRDDEEISEEELEEDNDDIENILEDEFPKDEEEMSGEEDEEQET</original>
    <variation>VSSFVFFFKTGSHSVAQGRVQWHNHSSLQPRTPGLKGSSHLSLSKC</variation>
    <location>
        <begin position="1212"/>
        <end position="1257"/>
    </location>
</feature>
<feature type="splice variant" id="VSP_039643" description="In isoform 5." evidence="7">
    <location>
        <begin position="1258"/>
        <end position="1911"/>
    </location>
</feature>
<feature type="splice variant" id="VSP_039644" description="In isoform 6." evidence="8">
    <location>
        <begin position="1284"/>
        <end position="1911"/>
    </location>
</feature>
<feature type="sequence variant" id="VAR_089392" description="In SPGF89; uncertain significance." evidence="6">
    <location>
        <begin position="203"/>
        <end position="205"/>
    </location>
</feature>
<feature type="sequence variant" id="VAR_089393" description="In SPGF89; uncertain significance; dbSNP:rs1204130200." evidence="6">
    <original>P</original>
    <variation>L</variation>
    <location>
        <position position="815"/>
    </location>
</feature>
<feature type="sequence variant" id="VAR_089394" description="In SPGF89; uncertain significance." evidence="6">
    <location>
        <position position="1086"/>
    </location>
</feature>
<feature type="sequence variant" id="VAR_089395" description="In SPGF89; uncertain significance; dbSNP:rs574889890." evidence="6">
    <original>E</original>
    <variation>K</variation>
    <location>
        <position position="1131"/>
    </location>
</feature>
<feature type="sequence variant" id="VAR_089396" description="In SPGF89; uncertain significance; dbSNP:rs746832146." evidence="6">
    <original>V</original>
    <variation>M</variation>
    <location>
        <position position="1692"/>
    </location>
</feature>
<feature type="sequence conflict" description="In Ref. 1; BAB70945." evidence="10" ref="1">
    <original>I</original>
    <variation>T</variation>
    <location>
        <position position="222"/>
    </location>
</feature>
<feature type="sequence conflict" description="In Ref. 1; BAC05368." evidence="10" ref="1">
    <original>K</original>
    <variation>R</variation>
    <location>
        <position position="1716"/>
    </location>
</feature>
<name>KAD9_HUMAN</name>
<reference key="1">
    <citation type="journal article" date="2004" name="Nat. Genet.">
        <title>Complete sequencing and characterization of 21,243 full-length human cDNAs.</title>
        <authorList>
            <person name="Ota T."/>
            <person name="Suzuki Y."/>
            <person name="Nishikawa T."/>
            <person name="Otsuki T."/>
            <person name="Sugiyama T."/>
            <person name="Irie R."/>
            <person name="Wakamatsu A."/>
            <person name="Hayashi K."/>
            <person name="Sato H."/>
            <person name="Nagai K."/>
            <person name="Kimura K."/>
            <person name="Makita H."/>
            <person name="Sekine M."/>
            <person name="Obayashi M."/>
            <person name="Nishi T."/>
            <person name="Shibahara T."/>
            <person name="Tanaka T."/>
            <person name="Ishii S."/>
            <person name="Yamamoto J."/>
            <person name="Saito K."/>
            <person name="Kawai Y."/>
            <person name="Isono Y."/>
            <person name="Nakamura Y."/>
            <person name="Nagahari K."/>
            <person name="Murakami K."/>
            <person name="Yasuda T."/>
            <person name="Iwayanagi T."/>
            <person name="Wagatsuma M."/>
            <person name="Shiratori A."/>
            <person name="Sudo H."/>
            <person name="Hosoiri T."/>
            <person name="Kaku Y."/>
            <person name="Kodaira H."/>
            <person name="Kondo H."/>
            <person name="Sugawara M."/>
            <person name="Takahashi M."/>
            <person name="Kanda K."/>
            <person name="Yokoi T."/>
            <person name="Furuya T."/>
            <person name="Kikkawa E."/>
            <person name="Omura Y."/>
            <person name="Abe K."/>
            <person name="Kamihara K."/>
            <person name="Katsuta N."/>
            <person name="Sato K."/>
            <person name="Tanikawa M."/>
            <person name="Yamazaki M."/>
            <person name="Ninomiya K."/>
            <person name="Ishibashi T."/>
            <person name="Yamashita H."/>
            <person name="Murakawa K."/>
            <person name="Fujimori K."/>
            <person name="Tanai H."/>
            <person name="Kimata M."/>
            <person name="Watanabe M."/>
            <person name="Hiraoka S."/>
            <person name="Chiba Y."/>
            <person name="Ishida S."/>
            <person name="Ono Y."/>
            <person name="Takiguchi S."/>
            <person name="Watanabe S."/>
            <person name="Yosida M."/>
            <person name="Hotuta T."/>
            <person name="Kusano J."/>
            <person name="Kanehori K."/>
            <person name="Takahashi-Fujii A."/>
            <person name="Hara H."/>
            <person name="Tanase T.-O."/>
            <person name="Nomura Y."/>
            <person name="Togiya S."/>
            <person name="Komai F."/>
            <person name="Hara R."/>
            <person name="Takeuchi K."/>
            <person name="Arita M."/>
            <person name="Imose N."/>
            <person name="Musashino K."/>
            <person name="Yuuki H."/>
            <person name="Oshima A."/>
            <person name="Sasaki N."/>
            <person name="Aotsuka S."/>
            <person name="Yoshikawa Y."/>
            <person name="Matsunawa H."/>
            <person name="Ichihara T."/>
            <person name="Shiohata N."/>
            <person name="Sano S."/>
            <person name="Moriya S."/>
            <person name="Momiyama H."/>
            <person name="Satoh N."/>
            <person name="Takami S."/>
            <person name="Terashima Y."/>
            <person name="Suzuki O."/>
            <person name="Nakagawa S."/>
            <person name="Senoh A."/>
            <person name="Mizoguchi H."/>
            <person name="Goto Y."/>
            <person name="Shimizu F."/>
            <person name="Wakebe H."/>
            <person name="Hishigaki H."/>
            <person name="Watanabe T."/>
            <person name="Sugiyama A."/>
            <person name="Takemoto M."/>
            <person name="Kawakami B."/>
            <person name="Yamazaki M."/>
            <person name="Watanabe K."/>
            <person name="Kumagai A."/>
            <person name="Itakura S."/>
            <person name="Fukuzumi Y."/>
            <person name="Fujimori Y."/>
            <person name="Komiyama M."/>
            <person name="Tashiro H."/>
            <person name="Tanigami A."/>
            <person name="Fujiwara T."/>
            <person name="Ono T."/>
            <person name="Yamada K."/>
            <person name="Fujii Y."/>
            <person name="Ozaki K."/>
            <person name="Hirao M."/>
            <person name="Ohmori Y."/>
            <person name="Kawabata A."/>
            <person name="Hikiji T."/>
            <person name="Kobatake N."/>
            <person name="Inagaki H."/>
            <person name="Ikema Y."/>
            <person name="Okamoto S."/>
            <person name="Okitani R."/>
            <person name="Kawakami T."/>
            <person name="Noguchi S."/>
            <person name="Itoh T."/>
            <person name="Shigeta K."/>
            <person name="Senba T."/>
            <person name="Matsumura K."/>
            <person name="Nakajima Y."/>
            <person name="Mizuno T."/>
            <person name="Morinaga M."/>
            <person name="Sasaki M."/>
            <person name="Togashi T."/>
            <person name="Oyama M."/>
            <person name="Hata H."/>
            <person name="Watanabe M."/>
            <person name="Komatsu T."/>
            <person name="Mizushima-Sugano J."/>
            <person name="Satoh T."/>
            <person name="Shirai Y."/>
            <person name="Takahashi Y."/>
            <person name="Nakagawa K."/>
            <person name="Okumura K."/>
            <person name="Nagase T."/>
            <person name="Nomura N."/>
            <person name="Kikuchi H."/>
            <person name="Masuho Y."/>
            <person name="Yamashita R."/>
            <person name="Nakai K."/>
            <person name="Yada T."/>
            <person name="Nakamura Y."/>
            <person name="Ohara O."/>
            <person name="Isogai T."/>
            <person name="Sugano S."/>
        </authorList>
    </citation>
    <scope>NUCLEOTIDE SEQUENCE [LARGE SCALE MRNA] (ISOFORMS 2 AND 5)</scope>
    <scope>NUCLEOTIDE SEQUENCE [LARGE SCALE MRNA] OF 431-1911 (ISOFORM 3)</scope>
    <scope>NUCLEOTIDE SEQUENCE [LARGE SCALE MRNA] OF 1563-1911 (ISOFORM 4)</scope>
    <source>
        <tissue>Caudate nucleus</tissue>
        <tissue>Hair follicle dermal papilla</tissue>
        <tissue>Placenta</tissue>
        <tissue>Testis</tissue>
        <tissue>Thymus</tissue>
    </source>
</reference>
<reference key="2">
    <citation type="journal article" date="2003" name="Nature">
        <title>The DNA sequence and analysis of human chromosome 6.</title>
        <authorList>
            <person name="Mungall A.J."/>
            <person name="Palmer S.A."/>
            <person name="Sims S.K."/>
            <person name="Edwards C.A."/>
            <person name="Ashurst J.L."/>
            <person name="Wilming L."/>
            <person name="Jones M.C."/>
            <person name="Horton R."/>
            <person name="Hunt S.E."/>
            <person name="Scott C.E."/>
            <person name="Gilbert J.G.R."/>
            <person name="Clamp M.E."/>
            <person name="Bethel G."/>
            <person name="Milne S."/>
            <person name="Ainscough R."/>
            <person name="Almeida J.P."/>
            <person name="Ambrose K.D."/>
            <person name="Andrews T.D."/>
            <person name="Ashwell R.I.S."/>
            <person name="Babbage A.K."/>
            <person name="Bagguley C.L."/>
            <person name="Bailey J."/>
            <person name="Banerjee R."/>
            <person name="Barker D.J."/>
            <person name="Barlow K.F."/>
            <person name="Bates K."/>
            <person name="Beare D.M."/>
            <person name="Beasley H."/>
            <person name="Beasley O."/>
            <person name="Bird C.P."/>
            <person name="Blakey S.E."/>
            <person name="Bray-Allen S."/>
            <person name="Brook J."/>
            <person name="Brown A.J."/>
            <person name="Brown J.Y."/>
            <person name="Burford D.C."/>
            <person name="Burrill W."/>
            <person name="Burton J."/>
            <person name="Carder C."/>
            <person name="Carter N.P."/>
            <person name="Chapman J.C."/>
            <person name="Clark S.Y."/>
            <person name="Clark G."/>
            <person name="Clee C.M."/>
            <person name="Clegg S."/>
            <person name="Cobley V."/>
            <person name="Collier R.E."/>
            <person name="Collins J.E."/>
            <person name="Colman L.K."/>
            <person name="Corby N.R."/>
            <person name="Coville G.J."/>
            <person name="Culley K.M."/>
            <person name="Dhami P."/>
            <person name="Davies J."/>
            <person name="Dunn M."/>
            <person name="Earthrowl M.E."/>
            <person name="Ellington A.E."/>
            <person name="Evans K.A."/>
            <person name="Faulkner L."/>
            <person name="Francis M.D."/>
            <person name="Frankish A."/>
            <person name="Frankland J."/>
            <person name="French L."/>
            <person name="Garner P."/>
            <person name="Garnett J."/>
            <person name="Ghori M.J."/>
            <person name="Gilby L.M."/>
            <person name="Gillson C.J."/>
            <person name="Glithero R.J."/>
            <person name="Grafham D.V."/>
            <person name="Grant M."/>
            <person name="Gribble S."/>
            <person name="Griffiths C."/>
            <person name="Griffiths M.N.D."/>
            <person name="Hall R."/>
            <person name="Halls K.S."/>
            <person name="Hammond S."/>
            <person name="Harley J.L."/>
            <person name="Hart E.A."/>
            <person name="Heath P.D."/>
            <person name="Heathcott R."/>
            <person name="Holmes S.J."/>
            <person name="Howden P.J."/>
            <person name="Howe K.L."/>
            <person name="Howell G.R."/>
            <person name="Huckle E."/>
            <person name="Humphray S.J."/>
            <person name="Humphries M.D."/>
            <person name="Hunt A.R."/>
            <person name="Johnson C.M."/>
            <person name="Joy A.A."/>
            <person name="Kay M."/>
            <person name="Keenan S.J."/>
            <person name="Kimberley A.M."/>
            <person name="King A."/>
            <person name="Laird G.K."/>
            <person name="Langford C."/>
            <person name="Lawlor S."/>
            <person name="Leongamornlert D.A."/>
            <person name="Leversha M."/>
            <person name="Lloyd C.R."/>
            <person name="Lloyd D.M."/>
            <person name="Loveland J.E."/>
            <person name="Lovell J."/>
            <person name="Martin S."/>
            <person name="Mashreghi-Mohammadi M."/>
            <person name="Maslen G.L."/>
            <person name="Matthews L."/>
            <person name="McCann O.T."/>
            <person name="McLaren S.J."/>
            <person name="McLay K."/>
            <person name="McMurray A."/>
            <person name="Moore M.J.F."/>
            <person name="Mullikin J.C."/>
            <person name="Niblett D."/>
            <person name="Nickerson T."/>
            <person name="Novik K.L."/>
            <person name="Oliver K."/>
            <person name="Overton-Larty E.K."/>
            <person name="Parker A."/>
            <person name="Patel R."/>
            <person name="Pearce A.V."/>
            <person name="Peck A.I."/>
            <person name="Phillimore B.J.C.T."/>
            <person name="Phillips S."/>
            <person name="Plumb R.W."/>
            <person name="Porter K.M."/>
            <person name="Ramsey Y."/>
            <person name="Ranby S.A."/>
            <person name="Rice C.M."/>
            <person name="Ross M.T."/>
            <person name="Searle S.M."/>
            <person name="Sehra H.K."/>
            <person name="Sheridan E."/>
            <person name="Skuce C.D."/>
            <person name="Smith S."/>
            <person name="Smith M."/>
            <person name="Spraggon L."/>
            <person name="Squares S.L."/>
            <person name="Steward C.A."/>
            <person name="Sycamore N."/>
            <person name="Tamlyn-Hall G."/>
            <person name="Tester J."/>
            <person name="Theaker A.J."/>
            <person name="Thomas D.W."/>
            <person name="Thorpe A."/>
            <person name="Tracey A."/>
            <person name="Tromans A."/>
            <person name="Tubby B."/>
            <person name="Wall M."/>
            <person name="Wallis J.M."/>
            <person name="West A.P."/>
            <person name="White S.S."/>
            <person name="Whitehead S.L."/>
            <person name="Whittaker H."/>
            <person name="Wild A."/>
            <person name="Willey D.J."/>
            <person name="Wilmer T.E."/>
            <person name="Wood J.M."/>
            <person name="Wray P.W."/>
            <person name="Wyatt J.C."/>
            <person name="Young L."/>
            <person name="Younger R.M."/>
            <person name="Bentley D.R."/>
            <person name="Coulson A."/>
            <person name="Durbin R.M."/>
            <person name="Hubbard T."/>
            <person name="Sulston J.E."/>
            <person name="Dunham I."/>
            <person name="Rogers J."/>
            <person name="Beck S."/>
        </authorList>
    </citation>
    <scope>NUCLEOTIDE SEQUENCE [LARGE SCALE GENOMIC DNA]</scope>
</reference>
<reference key="3">
    <citation type="submission" date="2005-09" db="EMBL/GenBank/DDBJ databases">
        <authorList>
            <person name="Mural R.J."/>
            <person name="Istrail S."/>
            <person name="Sutton G.G."/>
            <person name="Florea L."/>
            <person name="Halpern A.L."/>
            <person name="Mobarry C.M."/>
            <person name="Lippert R."/>
            <person name="Walenz B."/>
            <person name="Shatkay H."/>
            <person name="Dew I."/>
            <person name="Miller J.R."/>
            <person name="Flanigan M.J."/>
            <person name="Edwards N.J."/>
            <person name="Bolanos R."/>
            <person name="Fasulo D."/>
            <person name="Halldorsson B.V."/>
            <person name="Hannenhalli S."/>
            <person name="Turner R."/>
            <person name="Yooseph S."/>
            <person name="Lu F."/>
            <person name="Nusskern D.R."/>
            <person name="Shue B.C."/>
            <person name="Zheng X.H."/>
            <person name="Zhong F."/>
            <person name="Delcher A.L."/>
            <person name="Huson D.H."/>
            <person name="Kravitz S.A."/>
            <person name="Mouchard L."/>
            <person name="Reinert K."/>
            <person name="Remington K.A."/>
            <person name="Clark A.G."/>
            <person name="Waterman M.S."/>
            <person name="Eichler E.E."/>
            <person name="Adams M.D."/>
            <person name="Hunkapiller M.W."/>
            <person name="Myers E.W."/>
            <person name="Venter J.C."/>
        </authorList>
    </citation>
    <scope>NUCLEOTIDE SEQUENCE [LARGE SCALE GENOMIC DNA]</scope>
</reference>
<reference key="4">
    <citation type="journal article" date="2004" name="Genome Res.">
        <title>The status, quality, and expansion of the NIH full-length cDNA project: the Mammalian Gene Collection (MGC).</title>
        <authorList>
            <consortium name="The MGC Project Team"/>
        </authorList>
    </citation>
    <scope>NUCLEOTIDE SEQUENCE [LARGE SCALE MRNA] (ISOFORM 2)</scope>
    <scope>NUCLEOTIDE SEQUENCE [LARGE SCALE MRNA] OF 1067-1911 (ISOFORM 6)</scope>
    <scope>NUCLEOTIDE SEQUENCE [LARGE SCALE MRNA] OF 1587-1911 (ISOFORM 4)</scope>
    <source>
        <tissue>Heart</tissue>
        <tissue>Lung</tissue>
        <tissue>Pituitary</tissue>
        <tissue>Testis</tissue>
    </source>
</reference>
<reference key="5">
    <citation type="journal article" date="2013" name="Int. J. Biochem. Cell Biol.">
        <title>The human adenylate kinase 9 is a nucleoside mono- and diphosphate kinase.</title>
        <authorList>
            <person name="Amiri M."/>
            <person name="Conserva F."/>
            <person name="Panayiotou C."/>
            <person name="Karlsson A."/>
            <person name="Solaroli N."/>
        </authorList>
    </citation>
    <scope>FUNCTION</scope>
    <scope>CATALYTIC ACTIVITY</scope>
    <scope>BIOPHYSICOCHEMICAL PROPERTIES</scope>
    <scope>SUBCELLULAR LOCATION</scope>
</reference>
<reference key="6">
    <citation type="journal article" date="2023" name="EBioMedicine">
        <title>Deficiency in AK9 causes asthenozoospermia and male infertility by destabilising sperm nucleotide homeostasis.</title>
        <authorList>
            <person name="Sha Y."/>
            <person name="Liu W."/>
            <person name="Li S."/>
            <person name="Osadchuk L.V."/>
            <person name="Chen Y."/>
            <person name="Nie H."/>
            <person name="Gao S."/>
            <person name="Xie L."/>
            <person name="Qin W."/>
            <person name="Zhou H."/>
            <person name="Li L."/>
        </authorList>
    </citation>
    <scope>VARIANTS SPGF89 203-GLU--GLU-205 DEL; LEU-815; GLU-1086 DEL; LYS-1131 AND MET-1692</scope>
    <scope>INVOLVEMENT IN SPGF89</scope>
</reference>
<reference key="7">
    <citation type="journal article" date="2024" name="EBioMedicine">
        <authorList>
            <person name="Sha Y."/>
            <person name="Liu W."/>
            <person name="Li S."/>
            <person name="Osadchuk L.V."/>
            <person name="Chen Y."/>
            <person name="Nie H."/>
            <person name="Gao S."/>
            <person name="Xie L."/>
            <person name="Qin W."/>
            <person name="Zhou H."/>
            <person name="Li L."/>
        </authorList>
    </citation>
    <scope>ERRATUM OF PUBMED:37713809</scope>
</reference>
<dbReference type="EC" id="2.7.4.4" evidence="5"/>
<dbReference type="EC" id="2.7.4.6" evidence="5"/>
<dbReference type="EMBL" id="AK055538">
    <property type="protein sequence ID" value="BAB70945.1"/>
    <property type="molecule type" value="mRNA"/>
</dbReference>
<dbReference type="EMBL" id="AK098657">
    <property type="protein sequence ID" value="BAC05368.1"/>
    <property type="status" value="ALT_INIT"/>
    <property type="molecule type" value="mRNA"/>
</dbReference>
<dbReference type="EMBL" id="AK124171">
    <property type="status" value="NOT_ANNOTATED_CDS"/>
    <property type="molecule type" value="mRNA"/>
</dbReference>
<dbReference type="EMBL" id="AK131244">
    <property type="protein sequence ID" value="BAD18424.1"/>
    <property type="molecule type" value="mRNA"/>
</dbReference>
<dbReference type="EMBL" id="AK315561">
    <property type="protein sequence ID" value="BAG37937.1"/>
    <property type="molecule type" value="mRNA"/>
</dbReference>
<dbReference type="EMBL" id="AL121788">
    <property type="status" value="NOT_ANNOTATED_CDS"/>
    <property type="molecule type" value="Genomic_DNA"/>
</dbReference>
<dbReference type="EMBL" id="AL133472">
    <property type="status" value="NOT_ANNOTATED_CDS"/>
    <property type="molecule type" value="Genomic_DNA"/>
</dbReference>
<dbReference type="EMBL" id="AL109947">
    <property type="status" value="NOT_ANNOTATED_CDS"/>
    <property type="molecule type" value="Genomic_DNA"/>
</dbReference>
<dbReference type="EMBL" id="AL139391">
    <property type="status" value="NOT_ANNOTATED_CDS"/>
    <property type="molecule type" value="Genomic_DNA"/>
</dbReference>
<dbReference type="EMBL" id="CH471051">
    <property type="protein sequence ID" value="EAW48333.1"/>
    <property type="molecule type" value="Genomic_DNA"/>
</dbReference>
<dbReference type="EMBL" id="BC022031">
    <property type="protein sequence ID" value="AAH22031.1"/>
    <property type="molecule type" value="mRNA"/>
</dbReference>
<dbReference type="EMBL" id="BC087860">
    <property type="protein sequence ID" value="AAH87860.1"/>
    <property type="molecule type" value="mRNA"/>
</dbReference>
<dbReference type="EMBL" id="BC101714">
    <property type="protein sequence ID" value="AAI01715.1"/>
    <property type="status" value="ALT_INIT"/>
    <property type="molecule type" value="mRNA"/>
</dbReference>
<dbReference type="EMBL" id="BC111948">
    <property type="protein sequence ID" value="AAI11949.1"/>
    <property type="status" value="ALT_INIT"/>
    <property type="molecule type" value="mRNA"/>
</dbReference>
<dbReference type="CCDS" id="CCDS5077.1">
    <molecule id="Q5TCS8-2"/>
</dbReference>
<dbReference type="CCDS" id="CCDS55048.1">
    <molecule id="Q5TCS8-4"/>
</dbReference>
<dbReference type="RefSeq" id="NP_001138600.2">
    <molecule id="Q5TCS8-4"/>
    <property type="nucleotide sequence ID" value="NM_001145128.3"/>
</dbReference>
<dbReference type="RefSeq" id="NP_001316531.1">
    <molecule id="Q5TCS8-2"/>
    <property type="nucleotide sequence ID" value="NM_001329602.2"/>
</dbReference>
<dbReference type="RefSeq" id="NP_659462.1">
    <molecule id="Q5TCS8-2"/>
    <property type="nucleotide sequence ID" value="NM_145025.5"/>
</dbReference>
<dbReference type="SMR" id="Q5TCS8"/>
<dbReference type="BioGRID" id="128702">
    <property type="interactions" value="18"/>
</dbReference>
<dbReference type="FunCoup" id="Q5TCS8">
    <property type="interactions" value="2011"/>
</dbReference>
<dbReference type="IntAct" id="Q5TCS8">
    <property type="interactions" value="13"/>
</dbReference>
<dbReference type="STRING" id="9606.ENSP00000410186"/>
<dbReference type="GlyGen" id="Q5TCS8">
    <property type="glycosylation" value="2 sites, 1 O-linked glycan (2 sites)"/>
</dbReference>
<dbReference type="iPTMnet" id="Q5TCS8"/>
<dbReference type="PhosphoSitePlus" id="Q5TCS8"/>
<dbReference type="BioMuta" id="AK9"/>
<dbReference type="DMDM" id="302393675"/>
<dbReference type="jPOST" id="Q5TCS8"/>
<dbReference type="MassIVE" id="Q5TCS8"/>
<dbReference type="PaxDb" id="9606-ENSP00000410186"/>
<dbReference type="PeptideAtlas" id="Q5TCS8"/>
<dbReference type="ProteomicsDB" id="64979">
    <molecule id="Q5TCS8-4"/>
</dbReference>
<dbReference type="ProteomicsDB" id="64980">
    <molecule id="Q5TCS8-1"/>
</dbReference>
<dbReference type="ProteomicsDB" id="64981">
    <molecule id="Q5TCS8-2"/>
</dbReference>
<dbReference type="ProteomicsDB" id="64982">
    <molecule id="Q5TCS8-3"/>
</dbReference>
<dbReference type="ProteomicsDB" id="64983">
    <molecule id="Q5TCS8-5"/>
</dbReference>
<dbReference type="ProteomicsDB" id="64984">
    <molecule id="Q5TCS8-6"/>
</dbReference>
<dbReference type="Antibodypedia" id="32270">
    <property type="antibodies" value="126 antibodies from 17 providers"/>
</dbReference>
<dbReference type="DNASU" id="221264"/>
<dbReference type="Ensembl" id="ENST00000285397.9">
    <molecule id="Q5TCS8-2"/>
    <property type="protein sequence ID" value="ENSP00000285397.4"/>
    <property type="gene ID" value="ENSG00000155085.16"/>
</dbReference>
<dbReference type="Ensembl" id="ENST00000355283.1">
    <molecule id="Q5TCS8-5"/>
    <property type="protein sequence ID" value="ENSP00000347431.1"/>
    <property type="gene ID" value="ENSG00000155085.16"/>
</dbReference>
<dbReference type="Ensembl" id="ENST00000424296.7">
    <molecule id="Q5TCS8-4"/>
    <property type="protein sequence ID" value="ENSP00000410186.2"/>
    <property type="gene ID" value="ENSG00000155085.16"/>
</dbReference>
<dbReference type="GeneID" id="221264"/>
<dbReference type="KEGG" id="hsa:221264"/>
<dbReference type="MANE-Select" id="ENST00000424296.7">
    <property type="protein sequence ID" value="ENSP00000410186.2"/>
    <property type="RefSeq nucleotide sequence ID" value="NM_001145128.3"/>
    <property type="RefSeq protein sequence ID" value="NP_001138600.2"/>
</dbReference>
<dbReference type="UCSC" id="uc003ptn.2">
    <molecule id="Q5TCS8-4"/>
    <property type="organism name" value="human"/>
</dbReference>
<dbReference type="AGR" id="HGNC:33814"/>
<dbReference type="CTD" id="221264"/>
<dbReference type="DisGeNET" id="221264"/>
<dbReference type="GeneCards" id="AK9"/>
<dbReference type="HGNC" id="HGNC:33814">
    <property type="gene designation" value="AK9"/>
</dbReference>
<dbReference type="HPA" id="ENSG00000155085">
    <property type="expression patterns" value="Low tissue specificity"/>
</dbReference>
<dbReference type="MalaCards" id="AK9"/>
<dbReference type="MIM" id="615358">
    <property type="type" value="gene"/>
</dbReference>
<dbReference type="MIM" id="620705">
    <property type="type" value="phenotype"/>
</dbReference>
<dbReference type="neXtProt" id="NX_Q5TCS8"/>
<dbReference type="OpenTargets" id="ENSG00000155085"/>
<dbReference type="Orphanet" id="98913">
    <property type="disease" value="Postsynaptic congenital myasthenic syndromes"/>
</dbReference>
<dbReference type="PharmGKB" id="PA164715271"/>
<dbReference type="VEuPathDB" id="HostDB:ENSG00000155085"/>
<dbReference type="eggNOG" id="KOG3078">
    <property type="taxonomic scope" value="Eukaryota"/>
</dbReference>
<dbReference type="eggNOG" id="KOG3079">
    <property type="taxonomic scope" value="Eukaryota"/>
</dbReference>
<dbReference type="GeneTree" id="ENSGT00740000115564"/>
<dbReference type="HOGENOM" id="CLU_001764_0_0_1"/>
<dbReference type="InParanoid" id="Q5TCS8"/>
<dbReference type="OMA" id="MESVCGT"/>
<dbReference type="OrthoDB" id="439792at2759"/>
<dbReference type="PAN-GO" id="Q5TCS8">
    <property type="GO annotations" value="7 GO annotations based on evolutionary models"/>
</dbReference>
<dbReference type="PhylomeDB" id="Q5TCS8"/>
<dbReference type="TreeFam" id="TF330805"/>
<dbReference type="PathwayCommons" id="Q5TCS8"/>
<dbReference type="Reactome" id="R-HSA-499943">
    <property type="pathway name" value="Interconversion of nucleotide di- and triphosphates"/>
</dbReference>
<dbReference type="SABIO-RK" id="Q5TCS8"/>
<dbReference type="SignaLink" id="Q5TCS8"/>
<dbReference type="BioGRID-ORCS" id="221264">
    <property type="hits" value="13 hits in 1147 CRISPR screens"/>
</dbReference>
<dbReference type="ChiTaRS" id="AK9">
    <property type="organism name" value="human"/>
</dbReference>
<dbReference type="GenomeRNAi" id="221264"/>
<dbReference type="Pharos" id="Q5TCS8">
    <property type="development level" value="Tbio"/>
</dbReference>
<dbReference type="PRO" id="PR:Q5TCS8"/>
<dbReference type="Proteomes" id="UP000005640">
    <property type="component" value="Chromosome 6"/>
</dbReference>
<dbReference type="RNAct" id="Q5TCS8">
    <property type="molecule type" value="protein"/>
</dbReference>
<dbReference type="Bgee" id="ENSG00000155085">
    <property type="expression patterns" value="Expressed in sural nerve and 150 other cell types or tissues"/>
</dbReference>
<dbReference type="ExpressionAtlas" id="Q5TCS8">
    <property type="expression patterns" value="baseline and differential"/>
</dbReference>
<dbReference type="GO" id="GO:0005737">
    <property type="term" value="C:cytoplasm"/>
    <property type="evidence" value="ECO:0000314"/>
    <property type="project" value="UniProtKB"/>
</dbReference>
<dbReference type="GO" id="GO:0005829">
    <property type="term" value="C:cytosol"/>
    <property type="evidence" value="ECO:0000314"/>
    <property type="project" value="HPA"/>
</dbReference>
<dbReference type="GO" id="GO:0015630">
    <property type="term" value="C:microtubule cytoskeleton"/>
    <property type="evidence" value="ECO:0000314"/>
    <property type="project" value="HPA"/>
</dbReference>
<dbReference type="GO" id="GO:0031514">
    <property type="term" value="C:motile cilium"/>
    <property type="evidence" value="ECO:0007669"/>
    <property type="project" value="UniProtKB-SubCell"/>
</dbReference>
<dbReference type="GO" id="GO:0031965">
    <property type="term" value="C:nuclear membrane"/>
    <property type="evidence" value="ECO:0000314"/>
    <property type="project" value="HPA"/>
</dbReference>
<dbReference type="GO" id="GO:0005654">
    <property type="term" value="C:nucleoplasm"/>
    <property type="evidence" value="ECO:0000314"/>
    <property type="project" value="HPA"/>
</dbReference>
<dbReference type="GO" id="GO:0005634">
    <property type="term" value="C:nucleus"/>
    <property type="evidence" value="ECO:0000314"/>
    <property type="project" value="UniProtKB"/>
</dbReference>
<dbReference type="GO" id="GO:0004127">
    <property type="term" value="F:(d)CMP kinase activity"/>
    <property type="evidence" value="ECO:0000318"/>
    <property type="project" value="GO_Central"/>
</dbReference>
<dbReference type="GO" id="GO:0004017">
    <property type="term" value="F:adenylate kinase activity"/>
    <property type="evidence" value="ECO:0007669"/>
    <property type="project" value="RHEA"/>
</dbReference>
<dbReference type="GO" id="GO:0005524">
    <property type="term" value="F:ATP binding"/>
    <property type="evidence" value="ECO:0007669"/>
    <property type="project" value="UniProtKB-KW"/>
</dbReference>
<dbReference type="GO" id="GO:0016887">
    <property type="term" value="F:ATP hydrolysis activity"/>
    <property type="evidence" value="ECO:0007669"/>
    <property type="project" value="InterPro"/>
</dbReference>
<dbReference type="GO" id="GO:0036430">
    <property type="term" value="F:CMP kinase activity"/>
    <property type="evidence" value="ECO:0007669"/>
    <property type="project" value="RHEA"/>
</dbReference>
<dbReference type="GO" id="GO:0036431">
    <property type="term" value="F:dCMP kinase activity"/>
    <property type="evidence" value="ECO:0007669"/>
    <property type="project" value="RHEA"/>
</dbReference>
<dbReference type="GO" id="GO:0047506">
    <property type="term" value="F:deoxyadenylate kinase activity"/>
    <property type="evidence" value="ECO:0007669"/>
    <property type="project" value="RHEA"/>
</dbReference>
<dbReference type="GO" id="GO:0004550">
    <property type="term" value="F:nucleoside diphosphate kinase activity"/>
    <property type="evidence" value="ECO:0000314"/>
    <property type="project" value="UniProtKB"/>
</dbReference>
<dbReference type="GO" id="GO:0050145">
    <property type="term" value="F:nucleoside monophosphate kinase activity"/>
    <property type="evidence" value="ECO:0000314"/>
    <property type="project" value="UniProtKB"/>
</dbReference>
<dbReference type="GO" id="GO:0033862">
    <property type="term" value="F:UMP kinase activity"/>
    <property type="evidence" value="ECO:0000318"/>
    <property type="project" value="GO_Central"/>
</dbReference>
<dbReference type="GO" id="GO:0046705">
    <property type="term" value="P:CDP biosynthetic process"/>
    <property type="evidence" value="ECO:0000318"/>
    <property type="project" value="GO_Central"/>
</dbReference>
<dbReference type="GO" id="GO:0006225">
    <property type="term" value="P:UDP biosynthetic process"/>
    <property type="evidence" value="ECO:0000318"/>
    <property type="project" value="GO_Central"/>
</dbReference>
<dbReference type="CDD" id="cd01428">
    <property type="entry name" value="ADK"/>
    <property type="match status" value="2"/>
</dbReference>
<dbReference type="FunFam" id="3.40.50.300:FF:001757">
    <property type="entry name" value="Adenylate kinase 9"/>
    <property type="match status" value="1"/>
</dbReference>
<dbReference type="FunFam" id="3.40.50.300:FF:004704">
    <property type="entry name" value="Adenylate kinase 9"/>
    <property type="match status" value="1"/>
</dbReference>
<dbReference type="Gene3D" id="3.40.50.300">
    <property type="entry name" value="P-loop containing nucleotide triphosphate hydrolases"/>
    <property type="match status" value="4"/>
</dbReference>
<dbReference type="InterPro" id="IPR003593">
    <property type="entry name" value="AAA+_ATPase"/>
</dbReference>
<dbReference type="InterPro" id="IPR000850">
    <property type="entry name" value="Adenylat/UMP-CMP_kin"/>
</dbReference>
<dbReference type="InterPro" id="IPR027417">
    <property type="entry name" value="P-loop_NTPase"/>
</dbReference>
<dbReference type="PANTHER" id="PTHR23359">
    <property type="entry name" value="NUCLEOTIDE KINASE"/>
    <property type="match status" value="1"/>
</dbReference>
<dbReference type="Pfam" id="PF00406">
    <property type="entry name" value="ADK"/>
    <property type="match status" value="2"/>
</dbReference>
<dbReference type="SMART" id="SM00382">
    <property type="entry name" value="AAA"/>
    <property type="match status" value="3"/>
</dbReference>
<dbReference type="SUPFAM" id="SSF52540">
    <property type="entry name" value="P-loop containing nucleoside triphosphate hydrolases"/>
    <property type="match status" value="6"/>
</dbReference>
<comment type="function">
    <text evidence="5">Broad-specificity nucleoside phosphate kinase involved in cellular nucleotide homeostasis by catalyzing nucleoside-phosphate interconversions. Similar to other adenylate kinases, preferentially catalyzes the phosphorylation of the nucleoside monophosphate AMP with ATP as phosphate donor to produce ADP. In vitro, can also catalyze the phosphorylation of CMP, dAMP and dCMP and use GTP as an alternate phosphate donor. Moreover, exhibits a diphosphate kinase activity, producing ATP, CTP, GTP, UTP, TTP, dATP, dCTP and dGTP from the corresponding diphosphate substrates with either ATP or GTP as phosphate donors. For this activity shows the following substrate preference CDP &gt; UDP &gt; ADP &gt; TDP.</text>
</comment>
<comment type="catalytic activity">
    <reaction evidence="5">
        <text>a ribonucleoside 5'-phosphate + ATP = a ribonucleoside 5'-diphosphate + ADP</text>
        <dbReference type="Rhea" id="RHEA:24036"/>
        <dbReference type="ChEBI" id="CHEBI:30616"/>
        <dbReference type="ChEBI" id="CHEBI:57930"/>
        <dbReference type="ChEBI" id="CHEBI:58043"/>
        <dbReference type="ChEBI" id="CHEBI:456216"/>
        <dbReference type="EC" id="2.7.4.4"/>
    </reaction>
</comment>
<comment type="catalytic activity">
    <reaction evidence="5">
        <text>AMP + ATP = 2 ADP</text>
        <dbReference type="Rhea" id="RHEA:12973"/>
        <dbReference type="ChEBI" id="CHEBI:30616"/>
        <dbReference type="ChEBI" id="CHEBI:456215"/>
        <dbReference type="ChEBI" id="CHEBI:456216"/>
    </reaction>
</comment>
<comment type="catalytic activity">
    <reaction evidence="5">
        <text>GTP + AMP = GDP + ADP</text>
        <dbReference type="Rhea" id="RHEA:29863"/>
        <dbReference type="ChEBI" id="CHEBI:37565"/>
        <dbReference type="ChEBI" id="CHEBI:58189"/>
        <dbReference type="ChEBI" id="CHEBI:456215"/>
        <dbReference type="ChEBI" id="CHEBI:456216"/>
    </reaction>
</comment>
<comment type="catalytic activity">
    <reaction evidence="5">
        <text>CMP + ATP = CDP + ADP</text>
        <dbReference type="Rhea" id="RHEA:11600"/>
        <dbReference type="ChEBI" id="CHEBI:30616"/>
        <dbReference type="ChEBI" id="CHEBI:58069"/>
        <dbReference type="ChEBI" id="CHEBI:60377"/>
        <dbReference type="ChEBI" id="CHEBI:456216"/>
    </reaction>
</comment>
<comment type="catalytic activity">
    <reaction evidence="5">
        <text>GTP + CMP = CDP + GDP</text>
        <dbReference type="Rhea" id="RHEA:79855"/>
        <dbReference type="ChEBI" id="CHEBI:37565"/>
        <dbReference type="ChEBI" id="CHEBI:58069"/>
        <dbReference type="ChEBI" id="CHEBI:58189"/>
        <dbReference type="ChEBI" id="CHEBI:60377"/>
    </reaction>
</comment>
<comment type="catalytic activity">
    <reaction evidence="5">
        <text>dAMP + ATP = dADP + ADP</text>
        <dbReference type="Rhea" id="RHEA:23100"/>
        <dbReference type="ChEBI" id="CHEBI:30616"/>
        <dbReference type="ChEBI" id="CHEBI:57667"/>
        <dbReference type="ChEBI" id="CHEBI:58245"/>
        <dbReference type="ChEBI" id="CHEBI:456216"/>
    </reaction>
</comment>
<comment type="catalytic activity">
    <reaction evidence="5">
        <text>dCMP + ATP = dCDP + ADP</text>
        <dbReference type="Rhea" id="RHEA:25094"/>
        <dbReference type="ChEBI" id="CHEBI:30616"/>
        <dbReference type="ChEBI" id="CHEBI:57566"/>
        <dbReference type="ChEBI" id="CHEBI:58593"/>
        <dbReference type="ChEBI" id="CHEBI:456216"/>
    </reaction>
</comment>
<comment type="catalytic activity">
    <reaction evidence="5">
        <text>a ribonucleoside 5'-diphosphate + ATP = a ribonucleoside 5'-triphosphate + ADP</text>
        <dbReference type="Rhea" id="RHEA:18113"/>
        <dbReference type="ChEBI" id="CHEBI:30616"/>
        <dbReference type="ChEBI" id="CHEBI:57930"/>
        <dbReference type="ChEBI" id="CHEBI:61557"/>
        <dbReference type="ChEBI" id="CHEBI:456216"/>
        <dbReference type="EC" id="2.7.4.6"/>
    </reaction>
</comment>
<comment type="catalytic activity">
    <reaction evidence="5">
        <text>CDP + ATP = CTP + ADP</text>
        <dbReference type="Rhea" id="RHEA:25237"/>
        <dbReference type="ChEBI" id="CHEBI:30616"/>
        <dbReference type="ChEBI" id="CHEBI:37563"/>
        <dbReference type="ChEBI" id="CHEBI:58069"/>
        <dbReference type="ChEBI" id="CHEBI:456216"/>
        <dbReference type="EC" id="2.7.4.6"/>
    </reaction>
</comment>
<comment type="catalytic activity">
    <reaction evidence="5">
        <text>CDP + GTP = CTP + GDP</text>
        <dbReference type="Rhea" id="RHEA:79859"/>
        <dbReference type="ChEBI" id="CHEBI:37563"/>
        <dbReference type="ChEBI" id="CHEBI:37565"/>
        <dbReference type="ChEBI" id="CHEBI:58069"/>
        <dbReference type="ChEBI" id="CHEBI:58189"/>
    </reaction>
</comment>
<comment type="catalytic activity">
    <reaction evidence="5">
        <text>GDP + ATP = GTP + ADP</text>
        <dbReference type="Rhea" id="RHEA:27686"/>
        <dbReference type="ChEBI" id="CHEBI:30616"/>
        <dbReference type="ChEBI" id="CHEBI:37565"/>
        <dbReference type="ChEBI" id="CHEBI:58189"/>
        <dbReference type="ChEBI" id="CHEBI:456216"/>
        <dbReference type="EC" id="2.7.4.6"/>
    </reaction>
</comment>
<comment type="catalytic activity">
    <reaction evidence="5">
        <text>UDP + ATP = UTP + ADP</text>
        <dbReference type="Rhea" id="RHEA:25098"/>
        <dbReference type="ChEBI" id="CHEBI:30616"/>
        <dbReference type="ChEBI" id="CHEBI:46398"/>
        <dbReference type="ChEBI" id="CHEBI:58223"/>
        <dbReference type="ChEBI" id="CHEBI:456216"/>
        <dbReference type="EC" id="2.7.4.6"/>
    </reaction>
</comment>
<comment type="catalytic activity">
    <reaction evidence="5">
        <text>GTP + UDP = UTP + GDP</text>
        <dbReference type="Rhea" id="RHEA:79863"/>
        <dbReference type="ChEBI" id="CHEBI:37565"/>
        <dbReference type="ChEBI" id="CHEBI:46398"/>
        <dbReference type="ChEBI" id="CHEBI:58189"/>
        <dbReference type="ChEBI" id="CHEBI:58223"/>
    </reaction>
</comment>
<comment type="catalytic activity">
    <reaction evidence="5">
        <text>dTDP + GTP = dTTP + GDP</text>
        <dbReference type="Rhea" id="RHEA:79867"/>
        <dbReference type="ChEBI" id="CHEBI:37565"/>
        <dbReference type="ChEBI" id="CHEBI:37568"/>
        <dbReference type="ChEBI" id="CHEBI:58189"/>
        <dbReference type="ChEBI" id="CHEBI:58369"/>
    </reaction>
</comment>
<comment type="catalytic activity">
    <reaction evidence="5">
        <text>dCDP + ATP = dCTP + ADP</text>
        <dbReference type="Rhea" id="RHEA:27678"/>
        <dbReference type="ChEBI" id="CHEBI:30616"/>
        <dbReference type="ChEBI" id="CHEBI:58593"/>
        <dbReference type="ChEBI" id="CHEBI:61481"/>
        <dbReference type="ChEBI" id="CHEBI:456216"/>
        <dbReference type="EC" id="2.7.4.6"/>
    </reaction>
</comment>
<comment type="catalytic activity">
    <reaction evidence="5">
        <text>dCDP + GTP = dCTP + GDP</text>
        <dbReference type="Rhea" id="RHEA:79875"/>
        <dbReference type="ChEBI" id="CHEBI:37565"/>
        <dbReference type="ChEBI" id="CHEBI:58189"/>
        <dbReference type="ChEBI" id="CHEBI:58593"/>
        <dbReference type="ChEBI" id="CHEBI:61481"/>
    </reaction>
</comment>
<comment type="catalytic activity">
    <reaction evidence="5">
        <text>dGDP + ATP = dGTP + ADP</text>
        <dbReference type="Rhea" id="RHEA:27690"/>
        <dbReference type="ChEBI" id="CHEBI:30616"/>
        <dbReference type="ChEBI" id="CHEBI:58595"/>
        <dbReference type="ChEBI" id="CHEBI:61429"/>
        <dbReference type="ChEBI" id="CHEBI:456216"/>
        <dbReference type="EC" id="2.7.4.6"/>
    </reaction>
</comment>
<comment type="catalytic activity">
    <reaction evidence="5">
        <text>dTDP + ATP = dTTP + ADP</text>
        <dbReference type="Rhea" id="RHEA:27682"/>
        <dbReference type="ChEBI" id="CHEBI:30616"/>
        <dbReference type="ChEBI" id="CHEBI:37568"/>
        <dbReference type="ChEBI" id="CHEBI:58369"/>
        <dbReference type="ChEBI" id="CHEBI:456216"/>
        <dbReference type="EC" id="2.7.4.6"/>
    </reaction>
</comment>
<comment type="catalytic activity">
    <reaction evidence="5">
        <text>dADP + GTP = dATP + GDP</text>
        <dbReference type="Rhea" id="RHEA:79871"/>
        <dbReference type="ChEBI" id="CHEBI:37565"/>
        <dbReference type="ChEBI" id="CHEBI:57667"/>
        <dbReference type="ChEBI" id="CHEBI:58189"/>
        <dbReference type="ChEBI" id="CHEBI:61404"/>
    </reaction>
</comment>
<comment type="biophysicochemical properties">
    <kinetics>
        <KM evidence="5">48 uM for AMP (with ATP as phosphate donor)</KM>
        <KM evidence="5">3600 uM for dAMP (with ATP as phosphate donor)</KM>
        <KM evidence="5">940 uM for CMP (with ATP as phosphate donor)</KM>
    </kinetics>
</comment>
<comment type="subcellular location">
    <subcellularLocation>
        <location evidence="5">Cytoplasm</location>
    </subcellularLocation>
    <subcellularLocation>
        <location evidence="5">Nucleus</location>
    </subcellularLocation>
    <subcellularLocation>
        <location evidence="1">Cell projection</location>
        <location evidence="1">Cilium</location>
        <location evidence="1">Flagellum</location>
    </subcellularLocation>
</comment>
<comment type="alternative products">
    <event type="alternative splicing"/>
    <isoform>
        <id>Q5TCS8-4</id>
        <name>4</name>
        <sequence type="displayed"/>
    </isoform>
    <isoform>
        <id>Q5TCS8-1</id>
        <name>1</name>
        <sequence type="described" ref="VSP_039639 VSP_039640"/>
    </isoform>
    <isoform>
        <id>Q5TCS8-2</id>
        <name>2</name>
        <sequence type="described" ref="VSP_028008 VSP_028009"/>
    </isoform>
    <isoform>
        <id>Q5TCS8-3</id>
        <name>3</name>
        <sequence type="described" ref="VSP_028010 VSP_028011"/>
    </isoform>
    <isoform>
        <id>Q5TCS8-5</id>
        <id>Q6ZNF1-1</id>
        <name>5</name>
        <sequence type="described" ref="VSP_039638 VSP_039642 VSP_039643"/>
    </isoform>
    <isoform>
        <id>Q5TCS8-6</id>
        <name>6</name>
        <sequence type="described" ref="VSP_039641 VSP_039644"/>
    </isoform>
</comment>
<comment type="disease" evidence="6">
    <disease id="DI-06843">
        <name>Spermatogenic failure 89</name>
        <acronym>SPGF89</acronym>
        <description>An autosomal recessive male infertility disorder due to severely reduced progressive motility of sperm.</description>
        <dbReference type="MIM" id="620705"/>
    </disease>
    <text>The disease may be caused by variants affecting the gene represented in this entry.</text>
</comment>
<comment type="similarity">
    <text evidence="10">Belongs to the adenylate kinase family.</text>
</comment>
<comment type="sequence caution" evidence="10">
    <conflict type="erroneous initiation">
        <sequence resource="EMBL-CDS" id="AAI01715"/>
    </conflict>
    <text>Truncated N-terminus.</text>
</comment>
<comment type="sequence caution" evidence="10">
    <conflict type="erroneous initiation">
        <sequence resource="EMBL-CDS" id="AAI11949"/>
    </conflict>
    <text>Truncated N-terminus.</text>
</comment>
<comment type="sequence caution" evidence="10">
    <conflict type="erroneous initiation">
        <sequence resource="EMBL-CDS" id="BAC05368"/>
    </conflict>
    <text>Truncated N-terminus.</text>
</comment>
<gene>
    <name evidence="9 11" type="primary">AK9</name>
    <name evidence="11" type="synonym">AKD1</name>
    <name evidence="11" type="synonym">AKD2</name>
    <name evidence="11" type="synonym">C6orf199</name>
    <name evidence="11" type="synonym">C6orf224</name>
</gene>